<name>Y199_MYCPN</name>
<comment type="subcellular location">
    <subcellularLocation>
        <location evidence="1">Cell membrane</location>
        <topology evidence="1">Lipid-anchor</topology>
    </subcellularLocation>
</comment>
<comment type="similarity">
    <text evidence="3">Belongs to the MG185/MG260 family.</text>
</comment>
<organism>
    <name type="scientific">Mycoplasma pneumoniae (strain ATCC 29342 / M129 / Subtype 1)</name>
    <name type="common">Mycoplasmoides pneumoniae</name>
    <dbReference type="NCBI Taxonomy" id="272634"/>
    <lineage>
        <taxon>Bacteria</taxon>
        <taxon>Bacillati</taxon>
        <taxon>Mycoplasmatota</taxon>
        <taxon>Mycoplasmoidales</taxon>
        <taxon>Mycoplasmoidaceae</taxon>
        <taxon>Mycoplasmoides</taxon>
    </lineage>
</organism>
<evidence type="ECO:0000255" key="1">
    <source>
        <dbReference type="PROSITE-ProRule" id="PRU00303"/>
    </source>
</evidence>
<evidence type="ECO:0000256" key="2">
    <source>
        <dbReference type="SAM" id="MobiDB-lite"/>
    </source>
</evidence>
<evidence type="ECO:0000305" key="3"/>
<keyword id="KW-1003">Cell membrane</keyword>
<keyword id="KW-0449">Lipoprotein</keyword>
<keyword id="KW-0472">Membrane</keyword>
<keyword id="KW-0564">Palmitate</keyword>
<keyword id="KW-1185">Reference proteome</keyword>
<keyword id="KW-0732">Signal</keyword>
<dbReference type="EMBL" id="U34795">
    <property type="protein sequence ID" value="AAC43682.1"/>
    <property type="molecule type" value="Genomic_DNA"/>
</dbReference>
<dbReference type="EMBL" id="U00089">
    <property type="protein sequence ID" value="AAB96280.1"/>
    <property type="molecule type" value="Genomic_DNA"/>
</dbReference>
<dbReference type="PIR" id="S62792">
    <property type="entry name" value="S62792"/>
</dbReference>
<dbReference type="RefSeq" id="NP_109887.1">
    <property type="nucleotide sequence ID" value="NC_000912.1"/>
</dbReference>
<dbReference type="RefSeq" id="WP_010874556.1">
    <property type="nucleotide sequence ID" value="NC_000912.1"/>
</dbReference>
<dbReference type="STRING" id="272634.MPN_199"/>
<dbReference type="EnsemblBacteria" id="AAB96280">
    <property type="protein sequence ID" value="AAB96280"/>
    <property type="gene ID" value="MPN_199"/>
</dbReference>
<dbReference type="KEGG" id="mpn:MPN_199"/>
<dbReference type="PATRIC" id="fig|272634.6.peg.217"/>
<dbReference type="HOGENOM" id="CLU_017227_1_0_14"/>
<dbReference type="OrthoDB" id="393769at2"/>
<dbReference type="BioCyc" id="MPNE272634:G1GJ3-319-MONOMER"/>
<dbReference type="Proteomes" id="UP000000808">
    <property type="component" value="Chromosome"/>
</dbReference>
<dbReference type="GO" id="GO:0005886">
    <property type="term" value="C:plasma membrane"/>
    <property type="evidence" value="ECO:0007669"/>
    <property type="project" value="UniProtKB-SubCell"/>
</dbReference>
<dbReference type="InterPro" id="IPR004890">
    <property type="entry name" value="Lipoprotein_10_C"/>
</dbReference>
<dbReference type="InterPro" id="IPR004984">
    <property type="entry name" value="Mycoplasma_lipoprotein_cen_dom"/>
</dbReference>
<dbReference type="Pfam" id="PF03202">
    <property type="entry name" value="Lipoprotein_10"/>
    <property type="match status" value="1"/>
</dbReference>
<dbReference type="Pfam" id="PF03305">
    <property type="entry name" value="Lipoprotein_X"/>
    <property type="match status" value="1"/>
</dbReference>
<dbReference type="PROSITE" id="PS51257">
    <property type="entry name" value="PROKAR_LIPOPROTEIN"/>
    <property type="match status" value="1"/>
</dbReference>
<protein>
    <recommendedName>
        <fullName>Uncharacterized lipoprotein MPN_199</fullName>
    </recommendedName>
</protein>
<feature type="signal peptide" evidence="1">
    <location>
        <begin position="1"/>
        <end position="20"/>
    </location>
</feature>
<feature type="chain" id="PRO_0000018727" description="Uncharacterized lipoprotein MPN_199">
    <location>
        <begin position="21"/>
        <end position="760"/>
    </location>
</feature>
<feature type="region of interest" description="Disordered" evidence="2">
    <location>
        <begin position="221"/>
        <end position="243"/>
    </location>
</feature>
<feature type="region of interest" description="Disordered" evidence="2">
    <location>
        <begin position="272"/>
        <end position="315"/>
    </location>
</feature>
<feature type="region of interest" description="Disordered" evidence="2">
    <location>
        <begin position="705"/>
        <end position="741"/>
    </location>
</feature>
<feature type="compositionally biased region" description="Basic and acidic residues" evidence="2">
    <location>
        <begin position="272"/>
        <end position="284"/>
    </location>
</feature>
<feature type="compositionally biased region" description="Polar residues" evidence="2">
    <location>
        <begin position="300"/>
        <end position="312"/>
    </location>
</feature>
<feature type="compositionally biased region" description="Basic and acidic residues" evidence="2">
    <location>
        <begin position="705"/>
        <end position="721"/>
    </location>
</feature>
<feature type="lipid moiety-binding region" description="N-palmitoyl cysteine" evidence="1">
    <location>
        <position position="21"/>
    </location>
</feature>
<feature type="lipid moiety-binding region" description="S-diacylglycerol cysteine" evidence="1">
    <location>
        <position position="21"/>
    </location>
</feature>
<proteinExistence type="inferred from homology"/>
<sequence length="760" mass="84150">MKFKLFLGSSFFGVATLLIACGTGRFDQIDDGKIKLAVVTSPSAASSLQTLLDQYNNTKAPADYPVEVVSLDSTGSYTKGKFDTQKRLAAKDKNNFYNLTFNYPDLVSSLAINGMELNLDGVNVSNFEQSFLDFNKNISGVRKPGIYALPATMSGEVLVLNGPVLHYILNSAKKKDGTESKIKTAQLKTASTQAEVKGTMTMASDEQTTKLWTNIQNAAKENAANGTTEKAEKTVSASSLQLKNTNKTTEGTLKIGTDDNTKNLWKKIEDAAKTNGEKGNEKQEATQSNASASLVKLDQKNTSQDKTQNTQTSDDEIKKSWGEYKEVEGGLKGYEFKADVFESWEKLNDFAVRVAKSFSKVSEEKKSGSDIQGVFGIGSLENALYTASFAAGGGDYNNFLFNIKKGRADFSNFFNHNSKTFQSLRDIFNSFKPLIDQKGLISNKHFDTPVNNYAKFHQLAFYVSSTARFPYSFAKDNVKRLIIGKRELEVNPKSMFAIKKENGNNGNSNLLGKVALDNNKSIELYENNIPNGKTDAILIKNQTLISALKNPKQTKSSQRSSQSTNTQNDAICYLAFNSKIRPDDKDIFLLDKFGEKFVTAIVNFEEKTEVKINTLQEKEAVVLPAPQKFKPTDPKSVALVQGPSLIGIHANANEDRSTIKFLNWYLNAEVDWKDGEKKTPAEYLAEKASYLLPFKKVLEKSKQNIKATSKEGEQNQGKKGDGAQNQGKKGDGAQNGKNDKAKHNGFCRYCRQPIFKRFCR</sequence>
<gene>
    <name type="ordered locus">MPN_199</name>
    <name type="ORF">GT9_orf760</name>
    <name type="ORF">MP632</name>
</gene>
<accession>Q50289</accession>
<reference key="1">
    <citation type="journal article" date="1996" name="Nucleic Acids Res.">
        <title>Sequence analysis of 56 kb from the genome of the bacterium Mycoplasma pneumoniae comprising the dnaA region, the atp operon and a cluster of ribosomal protein genes.</title>
        <authorList>
            <person name="Hilbert H."/>
            <person name="Himmelreich R."/>
            <person name="Plagens H."/>
            <person name="Herrmann R."/>
        </authorList>
    </citation>
    <scope>NUCLEOTIDE SEQUENCE [GENOMIC DNA]</scope>
    <source>
        <strain>ATCC 29342 / M129 / Subtype 1</strain>
    </source>
</reference>
<reference key="2">
    <citation type="journal article" date="1996" name="Nucleic Acids Res.">
        <title>Complete sequence analysis of the genome of the bacterium Mycoplasma pneumoniae.</title>
        <authorList>
            <person name="Himmelreich R."/>
            <person name="Hilbert H."/>
            <person name="Plagens H."/>
            <person name="Pirkl E."/>
            <person name="Li B.-C."/>
            <person name="Herrmann R."/>
        </authorList>
    </citation>
    <scope>NUCLEOTIDE SEQUENCE [LARGE SCALE GENOMIC DNA]</scope>
    <source>
        <strain>ATCC 29342 / M129 / Subtype 1</strain>
    </source>
</reference>